<reference key="1">
    <citation type="journal article" date="2007" name="Photosyn. Res.">
        <title>Complete nucleotide sequence of the freshwater unicellular cyanobacterium Synechococcus elongatus PCC 6301 chromosome: gene content and organization.</title>
        <authorList>
            <person name="Sugita C."/>
            <person name="Ogata K."/>
            <person name="Shikata M."/>
            <person name="Jikuya H."/>
            <person name="Takano J."/>
            <person name="Furumichi M."/>
            <person name="Kanehisa M."/>
            <person name="Omata T."/>
            <person name="Sugiura M."/>
            <person name="Sugita M."/>
        </authorList>
    </citation>
    <scope>NUCLEOTIDE SEQUENCE [LARGE SCALE GENOMIC DNA]</scope>
    <source>
        <strain>ATCC 27144 / PCC 6301 / SAUG 1402/1</strain>
    </source>
</reference>
<gene>
    <name evidence="2" type="primary">gmk</name>
    <name type="ordered locus">syc0359_c</name>
</gene>
<keyword id="KW-0067">ATP-binding</keyword>
<keyword id="KW-0963">Cytoplasm</keyword>
<keyword id="KW-0418">Kinase</keyword>
<keyword id="KW-0547">Nucleotide-binding</keyword>
<keyword id="KW-0808">Transferase</keyword>
<dbReference type="EC" id="2.7.4.8" evidence="2"/>
<dbReference type="EMBL" id="AP008231">
    <property type="protein sequence ID" value="BAD78549.1"/>
    <property type="molecule type" value="Genomic_DNA"/>
</dbReference>
<dbReference type="RefSeq" id="WP_011242672.1">
    <property type="nucleotide sequence ID" value="NC_006576.1"/>
</dbReference>
<dbReference type="SMR" id="Q5N570"/>
<dbReference type="KEGG" id="syc:syc0359_c"/>
<dbReference type="eggNOG" id="COG0194">
    <property type="taxonomic scope" value="Bacteria"/>
</dbReference>
<dbReference type="Proteomes" id="UP000001175">
    <property type="component" value="Chromosome"/>
</dbReference>
<dbReference type="GO" id="GO:0005829">
    <property type="term" value="C:cytosol"/>
    <property type="evidence" value="ECO:0007669"/>
    <property type="project" value="TreeGrafter"/>
</dbReference>
<dbReference type="GO" id="GO:0005524">
    <property type="term" value="F:ATP binding"/>
    <property type="evidence" value="ECO:0007669"/>
    <property type="project" value="UniProtKB-UniRule"/>
</dbReference>
<dbReference type="GO" id="GO:0004385">
    <property type="term" value="F:guanylate kinase activity"/>
    <property type="evidence" value="ECO:0007669"/>
    <property type="project" value="UniProtKB-UniRule"/>
</dbReference>
<dbReference type="CDD" id="cd00071">
    <property type="entry name" value="GMPK"/>
    <property type="match status" value="1"/>
</dbReference>
<dbReference type="FunFam" id="3.30.63.10:FF:000002">
    <property type="entry name" value="Guanylate kinase 1"/>
    <property type="match status" value="1"/>
</dbReference>
<dbReference type="Gene3D" id="3.30.63.10">
    <property type="entry name" value="Guanylate Kinase phosphate binding domain"/>
    <property type="match status" value="1"/>
</dbReference>
<dbReference type="Gene3D" id="3.40.50.300">
    <property type="entry name" value="P-loop containing nucleotide triphosphate hydrolases"/>
    <property type="match status" value="1"/>
</dbReference>
<dbReference type="HAMAP" id="MF_00328">
    <property type="entry name" value="Guanylate_kinase"/>
    <property type="match status" value="1"/>
</dbReference>
<dbReference type="InterPro" id="IPR008145">
    <property type="entry name" value="GK/Ca_channel_bsu"/>
</dbReference>
<dbReference type="InterPro" id="IPR008144">
    <property type="entry name" value="Guanylate_kin-like_dom"/>
</dbReference>
<dbReference type="InterPro" id="IPR017665">
    <property type="entry name" value="Guanylate_kinase"/>
</dbReference>
<dbReference type="InterPro" id="IPR020590">
    <property type="entry name" value="Guanylate_kinase_CS"/>
</dbReference>
<dbReference type="InterPro" id="IPR027417">
    <property type="entry name" value="P-loop_NTPase"/>
</dbReference>
<dbReference type="NCBIfam" id="TIGR03263">
    <property type="entry name" value="guanyl_kin"/>
    <property type="match status" value="1"/>
</dbReference>
<dbReference type="PANTHER" id="PTHR23117:SF13">
    <property type="entry name" value="GUANYLATE KINASE"/>
    <property type="match status" value="1"/>
</dbReference>
<dbReference type="PANTHER" id="PTHR23117">
    <property type="entry name" value="GUANYLATE KINASE-RELATED"/>
    <property type="match status" value="1"/>
</dbReference>
<dbReference type="Pfam" id="PF00625">
    <property type="entry name" value="Guanylate_kin"/>
    <property type="match status" value="1"/>
</dbReference>
<dbReference type="SMART" id="SM00072">
    <property type="entry name" value="GuKc"/>
    <property type="match status" value="1"/>
</dbReference>
<dbReference type="SUPFAM" id="SSF52540">
    <property type="entry name" value="P-loop containing nucleoside triphosphate hydrolases"/>
    <property type="match status" value="1"/>
</dbReference>
<dbReference type="PROSITE" id="PS00856">
    <property type="entry name" value="GUANYLATE_KINASE_1"/>
    <property type="match status" value="1"/>
</dbReference>
<dbReference type="PROSITE" id="PS50052">
    <property type="entry name" value="GUANYLATE_KINASE_2"/>
    <property type="match status" value="1"/>
</dbReference>
<feature type="chain" id="PRO_0000170626" description="Guanylate kinase">
    <location>
        <begin position="1"/>
        <end position="183"/>
    </location>
</feature>
<feature type="domain" description="Guanylate kinase-like" evidence="2">
    <location>
        <begin position="4"/>
        <end position="182"/>
    </location>
</feature>
<feature type="binding site" evidence="2">
    <location>
        <begin position="11"/>
        <end position="18"/>
    </location>
    <ligand>
        <name>ATP</name>
        <dbReference type="ChEBI" id="CHEBI:30616"/>
    </ligand>
</feature>
<evidence type="ECO:0000250" key="1">
    <source>
        <dbReference type="UniProtKB" id="Q9KNM4"/>
    </source>
</evidence>
<evidence type="ECO:0000255" key="2">
    <source>
        <dbReference type="HAMAP-Rule" id="MF_00328"/>
    </source>
</evidence>
<accession>Q5N570</accession>
<proteinExistence type="inferred from homology"/>
<comment type="function">
    <text evidence="2">Essential for recycling GMP and indirectly, cGMP.</text>
</comment>
<comment type="function">
    <text evidence="1">(Microbial infection) Catalyzes the phosphorylation of dZMP to dZDP, when the bacterium is infected by a phage that produces the substrate for the synthesis of dZTP (2- amino-2'-deoxyadenosine 5'-triphosphate), which is then used by the phage as a DNA polymerase substrate.</text>
</comment>
<comment type="catalytic activity">
    <reaction evidence="2">
        <text>GMP + ATP = GDP + ADP</text>
        <dbReference type="Rhea" id="RHEA:20780"/>
        <dbReference type="ChEBI" id="CHEBI:30616"/>
        <dbReference type="ChEBI" id="CHEBI:58115"/>
        <dbReference type="ChEBI" id="CHEBI:58189"/>
        <dbReference type="ChEBI" id="CHEBI:456216"/>
        <dbReference type="EC" id="2.7.4.8"/>
    </reaction>
</comment>
<comment type="catalytic activity">
    <reaction evidence="1">
        <text>dZMP + ATP = dZDP + ADP</text>
        <dbReference type="Rhea" id="RHEA:67640"/>
        <dbReference type="ChEBI" id="CHEBI:30616"/>
        <dbReference type="ChEBI" id="CHEBI:172927"/>
        <dbReference type="ChEBI" id="CHEBI:172929"/>
        <dbReference type="ChEBI" id="CHEBI:456216"/>
    </reaction>
</comment>
<comment type="pathway">
    <text evidence="1">Purine metabolism.</text>
</comment>
<comment type="subcellular location">
    <subcellularLocation>
        <location evidence="2">Cytoplasm</location>
    </subcellularLocation>
</comment>
<comment type="similarity">
    <text evidence="2">Belongs to the guanylate kinase family.</text>
</comment>
<protein>
    <recommendedName>
        <fullName evidence="2">Guanylate kinase</fullName>
        <ecNumber evidence="2">2.7.4.8</ecNumber>
    </recommendedName>
    <alternativeName>
        <fullName evidence="2">GMP kinase</fullName>
    </alternativeName>
</protein>
<name>KGUA_SYNP6</name>
<sequence length="183" mass="20245">MSIGRVVVLTGPSGVGKGTLLKAILSQHPEAFLSISATTRSPRPGEVDGQHYYFLSREEFQTKIAEQEFLEWAEFAGNLYGTPRSPVIEQVNLGRTVILEIELEGARQVRKTLPSARQVVLLPPSVEELEQRIRERATEDEAAIARRLLQAQTEIGAAKEFDRCVINDQLDTAITALEAAIFS</sequence>
<organism>
    <name type="scientific">Synechococcus sp. (strain ATCC 27144 / PCC 6301 / SAUG 1402/1)</name>
    <name type="common">Anacystis nidulans</name>
    <dbReference type="NCBI Taxonomy" id="269084"/>
    <lineage>
        <taxon>Bacteria</taxon>
        <taxon>Bacillati</taxon>
        <taxon>Cyanobacteriota</taxon>
        <taxon>Cyanophyceae</taxon>
        <taxon>Synechococcales</taxon>
        <taxon>Synechococcaceae</taxon>
        <taxon>Synechococcus</taxon>
    </lineage>
</organism>